<comment type="function">
    <text evidence="4">Possible ligand of InR/insulin-like receptor.</text>
</comment>
<comment type="function">
    <text evidence="3">Plays a role in regulating body size by increasing cell size and cell number of individual organs. Probably mediates its growth effects by acting as a ligand for the insulin receptor and transducing a signal via the Chico/PI3K/Akt(PKB) pathway.</text>
</comment>
<comment type="subunit">
    <text evidence="1">Heterodimer of a B chain and an A chain linked by two disulfide bonds.</text>
</comment>
<comment type="subcellular location">
    <subcellularLocation>
        <location evidence="4">Secreted</location>
    </subcellularLocation>
</comment>
<comment type="tissue specificity">
    <text evidence="3">Broadly expressed at a low level in the embryonic mesoderm, beginning at stage 12. Expressed at a high level in the embryonic anterior midgut, with expression diminishing at late stage 16. Expressed at a low level in larval imaginal disks. Expressed at a high level in larval salivary glands and in seven cells of each larval brain hemisphere that may correspond to neurosecretory cells.</text>
</comment>
<comment type="developmental stage">
    <text evidence="3">Expressed in the embryo and larva.</text>
</comment>
<comment type="miscellaneous">
    <text>Of the insulin-like peptides, Ilp2 is the closest homolog of human insulin.</text>
</comment>
<comment type="similarity">
    <text evidence="4">Belongs to the insulin family.</text>
</comment>
<reference key="1">
    <citation type="journal article" date="2001" name="Peptides">
        <title>Neuropeptides and their precursors in the fruitfly, Drosophila melanogaster.</title>
        <authorList>
            <person name="Vanden Broeck J.J.M."/>
        </authorList>
    </citation>
    <scope>NUCLEOTIDE SEQUENCE [MRNA]</scope>
</reference>
<reference key="2">
    <citation type="journal article" date="2000" name="Science">
        <title>The genome sequence of Drosophila melanogaster.</title>
        <authorList>
            <person name="Adams M.D."/>
            <person name="Celniker S.E."/>
            <person name="Holt R.A."/>
            <person name="Evans C.A."/>
            <person name="Gocayne J.D."/>
            <person name="Amanatides P.G."/>
            <person name="Scherer S.E."/>
            <person name="Li P.W."/>
            <person name="Hoskins R.A."/>
            <person name="Galle R.F."/>
            <person name="George R.A."/>
            <person name="Lewis S.E."/>
            <person name="Richards S."/>
            <person name="Ashburner M."/>
            <person name="Henderson S.N."/>
            <person name="Sutton G.G."/>
            <person name="Wortman J.R."/>
            <person name="Yandell M.D."/>
            <person name="Zhang Q."/>
            <person name="Chen L.X."/>
            <person name="Brandon R.C."/>
            <person name="Rogers Y.-H.C."/>
            <person name="Blazej R.G."/>
            <person name="Champe M."/>
            <person name="Pfeiffer B.D."/>
            <person name="Wan K.H."/>
            <person name="Doyle C."/>
            <person name="Baxter E.G."/>
            <person name="Helt G."/>
            <person name="Nelson C.R."/>
            <person name="Miklos G.L.G."/>
            <person name="Abril J.F."/>
            <person name="Agbayani A."/>
            <person name="An H.-J."/>
            <person name="Andrews-Pfannkoch C."/>
            <person name="Baldwin D."/>
            <person name="Ballew R.M."/>
            <person name="Basu A."/>
            <person name="Baxendale J."/>
            <person name="Bayraktaroglu L."/>
            <person name="Beasley E.M."/>
            <person name="Beeson K.Y."/>
            <person name="Benos P.V."/>
            <person name="Berman B.P."/>
            <person name="Bhandari D."/>
            <person name="Bolshakov S."/>
            <person name="Borkova D."/>
            <person name="Botchan M.R."/>
            <person name="Bouck J."/>
            <person name="Brokstein P."/>
            <person name="Brottier P."/>
            <person name="Burtis K.C."/>
            <person name="Busam D.A."/>
            <person name="Butler H."/>
            <person name="Cadieu E."/>
            <person name="Center A."/>
            <person name="Chandra I."/>
            <person name="Cherry J.M."/>
            <person name="Cawley S."/>
            <person name="Dahlke C."/>
            <person name="Davenport L.B."/>
            <person name="Davies P."/>
            <person name="de Pablos B."/>
            <person name="Delcher A."/>
            <person name="Deng Z."/>
            <person name="Mays A.D."/>
            <person name="Dew I."/>
            <person name="Dietz S.M."/>
            <person name="Dodson K."/>
            <person name="Doup L.E."/>
            <person name="Downes M."/>
            <person name="Dugan-Rocha S."/>
            <person name="Dunkov B.C."/>
            <person name="Dunn P."/>
            <person name="Durbin K.J."/>
            <person name="Evangelista C.C."/>
            <person name="Ferraz C."/>
            <person name="Ferriera S."/>
            <person name="Fleischmann W."/>
            <person name="Fosler C."/>
            <person name="Gabrielian A.E."/>
            <person name="Garg N.S."/>
            <person name="Gelbart W.M."/>
            <person name="Glasser K."/>
            <person name="Glodek A."/>
            <person name="Gong F."/>
            <person name="Gorrell J.H."/>
            <person name="Gu Z."/>
            <person name="Guan P."/>
            <person name="Harris M."/>
            <person name="Harris N.L."/>
            <person name="Harvey D.A."/>
            <person name="Heiman T.J."/>
            <person name="Hernandez J.R."/>
            <person name="Houck J."/>
            <person name="Hostin D."/>
            <person name="Houston K.A."/>
            <person name="Howland T.J."/>
            <person name="Wei M.-H."/>
            <person name="Ibegwam C."/>
            <person name="Jalali M."/>
            <person name="Kalush F."/>
            <person name="Karpen G.H."/>
            <person name="Ke Z."/>
            <person name="Kennison J.A."/>
            <person name="Ketchum K.A."/>
            <person name="Kimmel B.E."/>
            <person name="Kodira C.D."/>
            <person name="Kraft C.L."/>
            <person name="Kravitz S."/>
            <person name="Kulp D."/>
            <person name="Lai Z."/>
            <person name="Lasko P."/>
            <person name="Lei Y."/>
            <person name="Levitsky A.A."/>
            <person name="Li J.H."/>
            <person name="Li Z."/>
            <person name="Liang Y."/>
            <person name="Lin X."/>
            <person name="Liu X."/>
            <person name="Mattei B."/>
            <person name="McIntosh T.C."/>
            <person name="McLeod M.P."/>
            <person name="McPherson D."/>
            <person name="Merkulov G."/>
            <person name="Milshina N.V."/>
            <person name="Mobarry C."/>
            <person name="Morris J."/>
            <person name="Moshrefi A."/>
            <person name="Mount S.M."/>
            <person name="Moy M."/>
            <person name="Murphy B."/>
            <person name="Murphy L."/>
            <person name="Muzny D.M."/>
            <person name="Nelson D.L."/>
            <person name="Nelson D.R."/>
            <person name="Nelson K.A."/>
            <person name="Nixon K."/>
            <person name="Nusskern D.R."/>
            <person name="Pacleb J.M."/>
            <person name="Palazzolo M."/>
            <person name="Pittman G.S."/>
            <person name="Pan S."/>
            <person name="Pollard J."/>
            <person name="Puri V."/>
            <person name="Reese M.G."/>
            <person name="Reinert K."/>
            <person name="Remington K."/>
            <person name="Saunders R.D.C."/>
            <person name="Scheeler F."/>
            <person name="Shen H."/>
            <person name="Shue B.C."/>
            <person name="Siden-Kiamos I."/>
            <person name="Simpson M."/>
            <person name="Skupski M.P."/>
            <person name="Smith T.J."/>
            <person name="Spier E."/>
            <person name="Spradling A.C."/>
            <person name="Stapleton M."/>
            <person name="Strong R."/>
            <person name="Sun E."/>
            <person name="Svirskas R."/>
            <person name="Tector C."/>
            <person name="Turner R."/>
            <person name="Venter E."/>
            <person name="Wang A.H."/>
            <person name="Wang X."/>
            <person name="Wang Z.-Y."/>
            <person name="Wassarman D.A."/>
            <person name="Weinstock G.M."/>
            <person name="Weissenbach J."/>
            <person name="Williams S.M."/>
            <person name="Woodage T."/>
            <person name="Worley K.C."/>
            <person name="Wu D."/>
            <person name="Yang S."/>
            <person name="Yao Q.A."/>
            <person name="Ye J."/>
            <person name="Yeh R.-F."/>
            <person name="Zaveri J.S."/>
            <person name="Zhan M."/>
            <person name="Zhang G."/>
            <person name="Zhao Q."/>
            <person name="Zheng L."/>
            <person name="Zheng X.H."/>
            <person name="Zhong F.N."/>
            <person name="Zhong W."/>
            <person name="Zhou X."/>
            <person name="Zhu S.C."/>
            <person name="Zhu X."/>
            <person name="Smith H.O."/>
            <person name="Gibbs R.A."/>
            <person name="Myers E.W."/>
            <person name="Rubin G.M."/>
            <person name="Venter J.C."/>
        </authorList>
    </citation>
    <scope>NUCLEOTIDE SEQUENCE [LARGE SCALE GENOMIC DNA]</scope>
    <source>
        <strain>Berkeley</strain>
    </source>
</reference>
<reference key="3">
    <citation type="journal article" date="2002" name="Genome Biol.">
        <title>Annotation of the Drosophila melanogaster euchromatic genome: a systematic review.</title>
        <authorList>
            <person name="Misra S."/>
            <person name="Crosby M.A."/>
            <person name="Mungall C.J."/>
            <person name="Matthews B.B."/>
            <person name="Campbell K.S."/>
            <person name="Hradecky P."/>
            <person name="Huang Y."/>
            <person name="Kaminker J.S."/>
            <person name="Millburn G.H."/>
            <person name="Prochnik S.E."/>
            <person name="Smith C.D."/>
            <person name="Tupy J.L."/>
            <person name="Whitfield E.J."/>
            <person name="Bayraktaroglu L."/>
            <person name="Berman B.P."/>
            <person name="Bettencourt B.R."/>
            <person name="Celniker S.E."/>
            <person name="de Grey A.D.N.J."/>
            <person name="Drysdale R.A."/>
            <person name="Harris N.L."/>
            <person name="Richter J."/>
            <person name="Russo S."/>
            <person name="Schroeder A.J."/>
            <person name="Shu S.Q."/>
            <person name="Stapleton M."/>
            <person name="Yamada C."/>
            <person name="Ashburner M."/>
            <person name="Gelbart W.M."/>
            <person name="Rubin G.M."/>
            <person name="Lewis S.E."/>
        </authorList>
    </citation>
    <scope>GENOME REANNOTATION</scope>
    <source>
        <strain>Berkeley</strain>
    </source>
</reference>
<reference key="4">
    <citation type="journal article" date="2002" name="Genome Biol.">
        <title>A Drosophila full-length cDNA resource.</title>
        <authorList>
            <person name="Stapleton M."/>
            <person name="Carlson J.W."/>
            <person name="Brokstein P."/>
            <person name="Yu C."/>
            <person name="Champe M."/>
            <person name="George R.A."/>
            <person name="Guarin H."/>
            <person name="Kronmiller B."/>
            <person name="Pacleb J.M."/>
            <person name="Park S."/>
            <person name="Wan K.H."/>
            <person name="Rubin G.M."/>
            <person name="Celniker S.E."/>
        </authorList>
    </citation>
    <scope>NUCLEOTIDE SEQUENCE [LARGE SCALE MRNA]</scope>
    <source>
        <strain>Berkeley</strain>
        <tissue>Head</tissue>
    </source>
</reference>
<reference key="5">
    <citation type="journal article" date="2001" name="Curr. Biol.">
        <title>An evolutionarily conserved function of the Drosophila insulin receptor and insulin-like peptides in growth control.</title>
        <authorList>
            <person name="Brogiolo W."/>
            <person name="Stocker H."/>
            <person name="Ikeya T."/>
            <person name="Rintelen F."/>
            <person name="Fernandez R."/>
            <person name="Hafen E."/>
        </authorList>
    </citation>
    <scope>FUNCTION</scope>
    <scope>TISSUE SPECIFICITY</scope>
    <scope>DEVELOPMENTAL STAGE</scope>
</reference>
<keyword id="KW-0165">Cleavage on pair of basic residues</keyword>
<keyword id="KW-1015">Disulfide bond</keyword>
<keyword id="KW-0339">Growth factor</keyword>
<keyword id="KW-0341">Growth regulation</keyword>
<keyword id="KW-1185">Reference proteome</keyword>
<keyword id="KW-0964">Secreted</keyword>
<keyword id="KW-0732">Signal</keyword>
<evidence type="ECO:0000250" key="1"/>
<evidence type="ECO:0000255" key="2"/>
<evidence type="ECO:0000269" key="3">
    <source>
    </source>
</evidence>
<evidence type="ECO:0000305" key="4"/>
<evidence type="ECO:0000312" key="5">
    <source>
        <dbReference type="FlyBase" id="FBgn0036046"/>
    </source>
</evidence>
<evidence type="ECO:0000312" key="6">
    <source>
        <dbReference type="Proteomes" id="UP000000803"/>
    </source>
</evidence>
<accession>Q9VT51</accession>
<proteinExistence type="evidence at transcript level"/>
<sequence>MSKPLSFISMVAVILLASSTVKLAQGTLCSEKLNEVLSMVCEEYNPVIPHKRAMPGADSDLDALNPLQFVQEFEEEDNSISEPLRSALFPGSYLGGVLNSLAEVRRRTRQRQGIVERCCKKSCDMKALREYCSVVRN</sequence>
<name>INSL2_DROME</name>
<organism evidence="6">
    <name type="scientific">Drosophila melanogaster</name>
    <name type="common">Fruit fly</name>
    <dbReference type="NCBI Taxonomy" id="7227"/>
    <lineage>
        <taxon>Eukaryota</taxon>
        <taxon>Metazoa</taxon>
        <taxon>Ecdysozoa</taxon>
        <taxon>Arthropoda</taxon>
        <taxon>Hexapoda</taxon>
        <taxon>Insecta</taxon>
        <taxon>Pterygota</taxon>
        <taxon>Neoptera</taxon>
        <taxon>Endopterygota</taxon>
        <taxon>Diptera</taxon>
        <taxon>Brachycera</taxon>
        <taxon>Muscomorpha</taxon>
        <taxon>Ephydroidea</taxon>
        <taxon>Drosophilidae</taxon>
        <taxon>Drosophila</taxon>
        <taxon>Sophophora</taxon>
    </lineage>
</organism>
<protein>
    <recommendedName>
        <fullName evidence="5">Insulin-like peptide 2</fullName>
        <shortName>dILP2</shortName>
    </recommendedName>
    <alternativeName>
        <fullName>Insulin-related peptide 2</fullName>
    </alternativeName>
    <component>
        <recommendedName>
            <fullName>Insulin-like peptide 2 A chain</fullName>
        </recommendedName>
    </component>
    <component>
        <recommendedName>
            <fullName>Insulin-like peptide 2 B chain</fullName>
        </recommendedName>
    </component>
</protein>
<dbReference type="EMBL" id="AJ291726">
    <property type="protein sequence ID" value="CAC17605.1"/>
    <property type="molecule type" value="mRNA"/>
</dbReference>
<dbReference type="EMBL" id="AE014296">
    <property type="protein sequence ID" value="AAF50204.1"/>
    <property type="molecule type" value="Genomic_DNA"/>
</dbReference>
<dbReference type="EMBL" id="AY069095">
    <property type="protein sequence ID" value="AAL39240.1"/>
    <property type="molecule type" value="mRNA"/>
</dbReference>
<dbReference type="RefSeq" id="NP_524012.1">
    <property type="nucleotide sequence ID" value="NM_079288.3"/>
</dbReference>
<dbReference type="BioGRID" id="64538">
    <property type="interactions" value="13"/>
</dbReference>
<dbReference type="FunCoup" id="Q9VT51">
    <property type="interactions" value="288"/>
</dbReference>
<dbReference type="IntAct" id="Q9VT51">
    <property type="interactions" value="3"/>
</dbReference>
<dbReference type="STRING" id="7227.FBpp0076058"/>
<dbReference type="PaxDb" id="7227-FBpp0076058"/>
<dbReference type="DNASU" id="39150"/>
<dbReference type="EnsemblMetazoa" id="FBtr0076329">
    <property type="protein sequence ID" value="FBpp0076058"/>
    <property type="gene ID" value="FBgn0036046"/>
</dbReference>
<dbReference type="GeneID" id="39150"/>
<dbReference type="KEGG" id="dme:Dmel_CG8167"/>
<dbReference type="AGR" id="FB:FBgn0036046"/>
<dbReference type="CTD" id="39150"/>
<dbReference type="FlyBase" id="FBgn0036046">
    <property type="gene designation" value="Ilp2"/>
</dbReference>
<dbReference type="VEuPathDB" id="VectorBase:FBgn0036046"/>
<dbReference type="eggNOG" id="ENOG502T6SN">
    <property type="taxonomic scope" value="Eukaryota"/>
</dbReference>
<dbReference type="HOGENOM" id="CLU_125164_0_1_1"/>
<dbReference type="InParanoid" id="Q9VT51"/>
<dbReference type="OMA" id="CKEFNSV"/>
<dbReference type="OrthoDB" id="10019596at2759"/>
<dbReference type="PhylomeDB" id="Q9VT51"/>
<dbReference type="Reactome" id="R-DME-110478">
    <property type="pathway name" value="Insulin signaling pathway"/>
</dbReference>
<dbReference type="SignaLink" id="Q9VT51"/>
<dbReference type="BioGRID-ORCS" id="39150">
    <property type="hits" value="0 hits in 1 CRISPR screen"/>
</dbReference>
<dbReference type="GenomeRNAi" id="39150"/>
<dbReference type="PRO" id="PR:Q9VT51"/>
<dbReference type="Proteomes" id="UP000000803">
    <property type="component" value="Chromosome 3L"/>
</dbReference>
<dbReference type="Bgee" id="FBgn0036046">
    <property type="expression patterns" value="Expressed in dorsomedial neurosecretory cell (Drosophila) and 22 other cell types or tissues"/>
</dbReference>
<dbReference type="ExpressionAtlas" id="Q9VT51">
    <property type="expression patterns" value="baseline and differential"/>
</dbReference>
<dbReference type="GO" id="GO:0005576">
    <property type="term" value="C:extracellular region"/>
    <property type="evidence" value="ECO:0000304"/>
    <property type="project" value="Reactome"/>
</dbReference>
<dbReference type="GO" id="GO:0005615">
    <property type="term" value="C:extracellular space"/>
    <property type="evidence" value="ECO:0000314"/>
    <property type="project" value="FlyBase"/>
</dbReference>
<dbReference type="GO" id="GO:0008083">
    <property type="term" value="F:growth factor activity"/>
    <property type="evidence" value="ECO:0007669"/>
    <property type="project" value="UniProtKB-KW"/>
</dbReference>
<dbReference type="GO" id="GO:0005179">
    <property type="term" value="F:hormone activity"/>
    <property type="evidence" value="ECO:0007669"/>
    <property type="project" value="InterPro"/>
</dbReference>
<dbReference type="GO" id="GO:0005158">
    <property type="term" value="F:insulin receptor binding"/>
    <property type="evidence" value="ECO:0000316"/>
    <property type="project" value="UniProtKB"/>
</dbReference>
<dbReference type="GO" id="GO:0048018">
    <property type="term" value="F:receptor ligand activity"/>
    <property type="evidence" value="ECO:0000314"/>
    <property type="project" value="FlyBase"/>
</dbReference>
<dbReference type="GO" id="GO:0033500">
    <property type="term" value="P:carbohydrate homeostasis"/>
    <property type="evidence" value="ECO:0000315"/>
    <property type="project" value="FlyBase"/>
</dbReference>
<dbReference type="GO" id="GO:0071333">
    <property type="term" value="P:cellular response to glucose stimulus"/>
    <property type="evidence" value="ECO:0000270"/>
    <property type="project" value="FlyBase"/>
</dbReference>
<dbReference type="GO" id="GO:0008340">
    <property type="term" value="P:determination of adult lifespan"/>
    <property type="evidence" value="ECO:0000315"/>
    <property type="project" value="FlyBase"/>
</dbReference>
<dbReference type="GO" id="GO:0060180">
    <property type="term" value="P:female mating behavior"/>
    <property type="evidence" value="ECO:0000315"/>
    <property type="project" value="FlyBase"/>
</dbReference>
<dbReference type="GO" id="GO:0060250">
    <property type="term" value="P:germ-line stem-cell niche homeostasis"/>
    <property type="evidence" value="ECO:0000315"/>
    <property type="project" value="FlyBase"/>
</dbReference>
<dbReference type="GO" id="GO:0042593">
    <property type="term" value="P:glucose homeostasis"/>
    <property type="evidence" value="ECO:0000316"/>
    <property type="project" value="FlyBase"/>
</dbReference>
<dbReference type="GO" id="GO:0008286">
    <property type="term" value="P:insulin receptor signaling pathway"/>
    <property type="evidence" value="ECO:0000314"/>
    <property type="project" value="FlyBase"/>
</dbReference>
<dbReference type="GO" id="GO:0030536">
    <property type="term" value="P:larval feeding behavior"/>
    <property type="evidence" value="ECO:0000315"/>
    <property type="project" value="FlyBase"/>
</dbReference>
<dbReference type="GO" id="GO:0045475">
    <property type="term" value="P:locomotor rhythm"/>
    <property type="evidence" value="ECO:0000315"/>
    <property type="project" value="FlyBase"/>
</dbReference>
<dbReference type="GO" id="GO:0061964">
    <property type="term" value="P:negative regulation of entry into reproductive diapause"/>
    <property type="evidence" value="ECO:0000315"/>
    <property type="project" value="FlyBase"/>
</dbReference>
<dbReference type="GO" id="GO:2000252">
    <property type="term" value="P:negative regulation of feeding behavior"/>
    <property type="evidence" value="ECO:0000315"/>
    <property type="project" value="FlyBase"/>
</dbReference>
<dbReference type="GO" id="GO:0045818">
    <property type="term" value="P:negative regulation of glycogen catabolic process"/>
    <property type="evidence" value="ECO:0000314"/>
    <property type="project" value="FlyBase"/>
</dbReference>
<dbReference type="GO" id="GO:0030307">
    <property type="term" value="P:positive regulation of cell growth"/>
    <property type="evidence" value="ECO:0000315"/>
    <property type="project" value="UniProtKB"/>
</dbReference>
<dbReference type="GO" id="GO:0008284">
    <property type="term" value="P:positive regulation of cell population proliferation"/>
    <property type="evidence" value="ECO:0000315"/>
    <property type="project" value="UniProtKB"/>
</dbReference>
<dbReference type="GO" id="GO:0045793">
    <property type="term" value="P:positive regulation of cell size"/>
    <property type="evidence" value="ECO:0000315"/>
    <property type="project" value="FlyBase"/>
</dbReference>
<dbReference type="GO" id="GO:0040018">
    <property type="term" value="P:positive regulation of multicellular organism growth"/>
    <property type="evidence" value="ECO:0000315"/>
    <property type="project" value="FlyBase"/>
</dbReference>
<dbReference type="GO" id="GO:0046622">
    <property type="term" value="P:positive regulation of organ growth"/>
    <property type="evidence" value="ECO:0000315"/>
    <property type="project" value="FlyBase"/>
</dbReference>
<dbReference type="GO" id="GO:0008361">
    <property type="term" value="P:regulation of cell size"/>
    <property type="evidence" value="ECO:0000315"/>
    <property type="project" value="FlyBase"/>
</dbReference>
<dbReference type="GO" id="GO:0040009">
    <property type="term" value="P:regulation of growth rate"/>
    <property type="evidence" value="ECO:0000315"/>
    <property type="project" value="FlyBase"/>
</dbReference>
<dbReference type="GO" id="GO:0040014">
    <property type="term" value="P:regulation of multicellular organism growth"/>
    <property type="evidence" value="ECO:0000315"/>
    <property type="project" value="UniProtKB"/>
</dbReference>
<dbReference type="GO" id="GO:0046620">
    <property type="term" value="P:regulation of organ growth"/>
    <property type="evidence" value="ECO:0000315"/>
    <property type="project" value="UniProtKB"/>
</dbReference>
<dbReference type="GO" id="GO:1990928">
    <property type="term" value="P:response to amino acid starvation"/>
    <property type="evidence" value="ECO:0000270"/>
    <property type="project" value="FlyBase"/>
</dbReference>
<dbReference type="GO" id="GO:0032094">
    <property type="term" value="P:response to food"/>
    <property type="evidence" value="ECO:0000270"/>
    <property type="project" value="FlyBase"/>
</dbReference>
<dbReference type="GO" id="GO:0030431">
    <property type="term" value="P:sleep"/>
    <property type="evidence" value="ECO:0000315"/>
    <property type="project" value="FlyBase"/>
</dbReference>
<dbReference type="GO" id="GO:0070328">
    <property type="term" value="P:triglyceride homeostasis"/>
    <property type="evidence" value="ECO:0000315"/>
    <property type="project" value="FlyBase"/>
</dbReference>
<dbReference type="CDD" id="cd04366">
    <property type="entry name" value="IlGF_insulin_bombyxin_like"/>
    <property type="match status" value="1"/>
</dbReference>
<dbReference type="Gene3D" id="1.10.100.10">
    <property type="entry name" value="Insulin-like"/>
    <property type="match status" value="1"/>
</dbReference>
<dbReference type="InterPro" id="IPR016179">
    <property type="entry name" value="Insulin-like"/>
</dbReference>
<dbReference type="InterPro" id="IPR036438">
    <property type="entry name" value="Insulin-like_sf"/>
</dbReference>
<dbReference type="InterPro" id="IPR022353">
    <property type="entry name" value="Insulin_CS"/>
</dbReference>
<dbReference type="InterPro" id="IPR022352">
    <property type="entry name" value="Insulin_family"/>
</dbReference>
<dbReference type="PANTHER" id="PTHR13647:SF4">
    <property type="entry name" value="INSULIN-LIKE PEPTIDE 1-RELATED"/>
    <property type="match status" value="1"/>
</dbReference>
<dbReference type="PANTHER" id="PTHR13647">
    <property type="entry name" value="INSULIN-LIKE PEPTIDE 2-RELATED"/>
    <property type="match status" value="1"/>
</dbReference>
<dbReference type="Pfam" id="PF00049">
    <property type="entry name" value="Insulin"/>
    <property type="match status" value="1"/>
</dbReference>
<dbReference type="PRINTS" id="PR00276">
    <property type="entry name" value="INSULINFAMLY"/>
</dbReference>
<dbReference type="SMART" id="SM00078">
    <property type="entry name" value="IlGF"/>
    <property type="match status" value="1"/>
</dbReference>
<dbReference type="SUPFAM" id="SSF56994">
    <property type="entry name" value="Insulin-like"/>
    <property type="match status" value="1"/>
</dbReference>
<dbReference type="PROSITE" id="PS00262">
    <property type="entry name" value="INSULIN"/>
    <property type="match status" value="1"/>
</dbReference>
<feature type="signal peptide" evidence="2">
    <location>
        <begin position="1"/>
        <end position="26"/>
    </location>
</feature>
<feature type="chain" id="PRO_0000016189" description="Insulin-like peptide 2">
    <location>
        <begin position="27"/>
        <end position="137"/>
    </location>
</feature>
<feature type="peptide" id="PRO_0000016190" description="Insulin-like peptide 2 B chain" evidence="2">
    <location>
        <begin position="27"/>
        <end position="50"/>
    </location>
</feature>
<feature type="propeptide" id="PRO_0000016191" description="Connecting peptide" evidence="2">
    <location>
        <begin position="53"/>
        <end position="104"/>
    </location>
</feature>
<feature type="peptide" id="PRO_0000016192" description="Insulin-like peptide 2 A chain" evidence="2">
    <location>
        <begin position="108"/>
        <end position="137"/>
    </location>
</feature>
<feature type="disulfide bond" description="Interchain (between B and A chains)" evidence="1">
    <location>
        <begin position="29"/>
        <end position="119"/>
    </location>
</feature>
<feature type="disulfide bond" description="Interchain (between B and A chains)" evidence="1">
    <location>
        <begin position="41"/>
        <end position="132"/>
    </location>
</feature>
<feature type="disulfide bond" evidence="1">
    <location>
        <begin position="118"/>
        <end position="123"/>
    </location>
</feature>
<gene>
    <name evidence="5" type="primary">Ilp2</name>
    <name type="synonym">IRP</name>
    <name evidence="5" type="ORF">CG8167</name>
</gene>